<proteinExistence type="inferred from homology"/>
<reference key="1">
    <citation type="journal article" date="2008" name="Nucleic Acids Res.">
        <title>The complete nucleotide sequences of the five genetically distinct plastid genomes of Oenothera, subsection Oenothera: I. Sequence evaluation and plastome evolution.</title>
        <authorList>
            <person name="Greiner S."/>
            <person name="Wang X."/>
            <person name="Rauwolf U."/>
            <person name="Silber M.V."/>
            <person name="Mayer K."/>
            <person name="Meurer J."/>
            <person name="Haberer G."/>
            <person name="Herrmann R.G."/>
        </authorList>
    </citation>
    <scope>NUCLEOTIDE SEQUENCE [LARGE SCALE GENOMIC DNA]</scope>
    <source>
        <strain>cv. Atrovirens</strain>
    </source>
</reference>
<dbReference type="EMBL" id="EU262891">
    <property type="protein sequence ID" value="ABX10158.1"/>
    <property type="molecule type" value="Genomic_DNA"/>
</dbReference>
<dbReference type="RefSeq" id="YP_001687488.1">
    <property type="nucleotide sequence ID" value="NC_010362.1"/>
</dbReference>
<dbReference type="SMR" id="B0Z5G5"/>
<dbReference type="GeneID" id="5955424"/>
<dbReference type="GO" id="GO:0009507">
    <property type="term" value="C:chloroplast"/>
    <property type="evidence" value="ECO:0007669"/>
    <property type="project" value="UniProtKB-SubCell"/>
</dbReference>
<dbReference type="GO" id="GO:0005762">
    <property type="term" value="C:mitochondrial large ribosomal subunit"/>
    <property type="evidence" value="ECO:0007669"/>
    <property type="project" value="TreeGrafter"/>
</dbReference>
<dbReference type="GO" id="GO:0019843">
    <property type="term" value="F:rRNA binding"/>
    <property type="evidence" value="ECO:0007669"/>
    <property type="project" value="InterPro"/>
</dbReference>
<dbReference type="GO" id="GO:0003735">
    <property type="term" value="F:structural constituent of ribosome"/>
    <property type="evidence" value="ECO:0007669"/>
    <property type="project" value="InterPro"/>
</dbReference>
<dbReference type="GO" id="GO:0032543">
    <property type="term" value="P:mitochondrial translation"/>
    <property type="evidence" value="ECO:0007669"/>
    <property type="project" value="TreeGrafter"/>
</dbReference>
<dbReference type="CDD" id="cd01433">
    <property type="entry name" value="Ribosomal_L16_L10e"/>
    <property type="match status" value="1"/>
</dbReference>
<dbReference type="FunFam" id="3.90.1170.10:FF:000001">
    <property type="entry name" value="50S ribosomal protein L16"/>
    <property type="match status" value="1"/>
</dbReference>
<dbReference type="Gene3D" id="3.90.1170.10">
    <property type="entry name" value="Ribosomal protein L10e/L16"/>
    <property type="match status" value="1"/>
</dbReference>
<dbReference type="HAMAP" id="MF_01342">
    <property type="entry name" value="Ribosomal_uL16"/>
    <property type="match status" value="1"/>
</dbReference>
<dbReference type="InterPro" id="IPR047873">
    <property type="entry name" value="Ribosomal_uL16"/>
</dbReference>
<dbReference type="InterPro" id="IPR000114">
    <property type="entry name" value="Ribosomal_uL16_bact-type"/>
</dbReference>
<dbReference type="InterPro" id="IPR020798">
    <property type="entry name" value="Ribosomal_uL16_CS"/>
</dbReference>
<dbReference type="InterPro" id="IPR016180">
    <property type="entry name" value="Ribosomal_uL16_dom"/>
</dbReference>
<dbReference type="InterPro" id="IPR036920">
    <property type="entry name" value="Ribosomal_uL16_sf"/>
</dbReference>
<dbReference type="NCBIfam" id="TIGR01164">
    <property type="entry name" value="rplP_bact"/>
    <property type="match status" value="1"/>
</dbReference>
<dbReference type="PANTHER" id="PTHR12220">
    <property type="entry name" value="50S/60S RIBOSOMAL PROTEIN L16"/>
    <property type="match status" value="1"/>
</dbReference>
<dbReference type="PANTHER" id="PTHR12220:SF13">
    <property type="entry name" value="LARGE RIBOSOMAL SUBUNIT PROTEIN UL16M"/>
    <property type="match status" value="1"/>
</dbReference>
<dbReference type="Pfam" id="PF00252">
    <property type="entry name" value="Ribosomal_L16"/>
    <property type="match status" value="1"/>
</dbReference>
<dbReference type="PRINTS" id="PR00060">
    <property type="entry name" value="RIBOSOMALL16"/>
</dbReference>
<dbReference type="SUPFAM" id="SSF54686">
    <property type="entry name" value="Ribosomal protein L16p/L10e"/>
    <property type="match status" value="1"/>
</dbReference>
<dbReference type="PROSITE" id="PS00701">
    <property type="entry name" value="RIBOSOMAL_L16_2"/>
    <property type="match status" value="1"/>
</dbReference>
<geneLocation type="chloroplast"/>
<organism>
    <name type="scientific">Oenothera parviflora</name>
    <name type="common">Small-flowered evening primrose</name>
    <name type="synonym">Oenothera cruciata</name>
    <dbReference type="NCBI Taxonomy" id="482429"/>
    <lineage>
        <taxon>Eukaryota</taxon>
        <taxon>Viridiplantae</taxon>
        <taxon>Streptophyta</taxon>
        <taxon>Embryophyta</taxon>
        <taxon>Tracheophyta</taxon>
        <taxon>Spermatophyta</taxon>
        <taxon>Magnoliopsida</taxon>
        <taxon>eudicotyledons</taxon>
        <taxon>Gunneridae</taxon>
        <taxon>Pentapetalae</taxon>
        <taxon>rosids</taxon>
        <taxon>malvids</taxon>
        <taxon>Myrtales</taxon>
        <taxon>Onagraceae</taxon>
        <taxon>Onagroideae</taxon>
        <taxon>Onagreae</taxon>
        <taxon>Oenothera</taxon>
    </lineage>
</organism>
<accession>B0Z5G5</accession>
<evidence type="ECO:0000255" key="1">
    <source>
        <dbReference type="HAMAP-Rule" id="MF_01342"/>
    </source>
</evidence>
<evidence type="ECO:0000305" key="2"/>
<comment type="subunit">
    <text evidence="1">Part of the 50S ribosomal subunit.</text>
</comment>
<comment type="subcellular location">
    <subcellularLocation>
        <location>Plastid</location>
        <location>Chloroplast</location>
    </subcellularLocation>
</comment>
<comment type="similarity">
    <text evidence="1">Belongs to the universal ribosomal protein uL16 family.</text>
</comment>
<keyword id="KW-0150">Chloroplast</keyword>
<keyword id="KW-0934">Plastid</keyword>
<keyword id="KW-0687">Ribonucleoprotein</keyword>
<keyword id="KW-0689">Ribosomal protein</keyword>
<feature type="chain" id="PRO_0000354653" description="Large ribosomal subunit protein uL16c">
    <location>
        <begin position="1"/>
        <end position="135"/>
    </location>
</feature>
<gene>
    <name evidence="1" type="primary">rpl16</name>
</gene>
<sequence length="135" mass="15319">MLSPKRTRFRKQHRGRMRGISYRGNRICFGKYALQALEPAWITSRQIEAGRRAMTRNVRRGGKTWVRIFPDKPVTLRAAETRMGSGKGNPEYWVAVVKPGRILYEMGGVAENIARKAISIAASKMPIRTQFIISG</sequence>
<protein>
    <recommendedName>
        <fullName evidence="1">Large ribosomal subunit protein uL16c</fullName>
    </recommendedName>
    <alternativeName>
        <fullName evidence="2">50S ribosomal protein L16, chloroplastic</fullName>
    </alternativeName>
</protein>
<name>RK16_OENPA</name>